<accession>A9N716</accession>
<gene>
    <name evidence="1" type="primary">yhbP</name>
    <name type="ordered locus">SPAB_04082</name>
</gene>
<proteinExistence type="inferred from homology"/>
<comment type="similarity">
    <text evidence="1">Belongs to the UPF0306 family.</text>
</comment>
<evidence type="ECO:0000255" key="1">
    <source>
        <dbReference type="HAMAP-Rule" id="MF_00764"/>
    </source>
</evidence>
<feature type="chain" id="PRO_1000083533" description="UPF0306 protein YhbP">
    <location>
        <begin position="1"/>
        <end position="147"/>
    </location>
</feature>
<reference key="1">
    <citation type="submission" date="2007-11" db="EMBL/GenBank/DDBJ databases">
        <authorList>
            <consortium name="The Salmonella enterica serovar Paratyphi B Genome Sequencing Project"/>
            <person name="McClelland M."/>
            <person name="Sanderson E.K."/>
            <person name="Porwollik S."/>
            <person name="Spieth J."/>
            <person name="Clifton W.S."/>
            <person name="Fulton R."/>
            <person name="Cordes M."/>
            <person name="Wollam A."/>
            <person name="Shah N."/>
            <person name="Pepin K."/>
            <person name="Bhonagiri V."/>
            <person name="Nash W."/>
            <person name="Johnson M."/>
            <person name="Thiruvilangam P."/>
            <person name="Wilson R."/>
        </authorList>
    </citation>
    <scope>NUCLEOTIDE SEQUENCE [LARGE SCALE GENOMIC DNA]</scope>
    <source>
        <strain>ATCC BAA-1250 / SPB7</strain>
    </source>
</reference>
<name>YHBP_SALPB</name>
<organism>
    <name type="scientific">Salmonella paratyphi B (strain ATCC BAA-1250 / SPB7)</name>
    <dbReference type="NCBI Taxonomy" id="1016998"/>
    <lineage>
        <taxon>Bacteria</taxon>
        <taxon>Pseudomonadati</taxon>
        <taxon>Pseudomonadota</taxon>
        <taxon>Gammaproteobacteria</taxon>
        <taxon>Enterobacterales</taxon>
        <taxon>Enterobacteriaceae</taxon>
        <taxon>Salmonella</taxon>
    </lineage>
</organism>
<dbReference type="EMBL" id="CP000886">
    <property type="protein sequence ID" value="ABX69409.1"/>
    <property type="molecule type" value="Genomic_DNA"/>
</dbReference>
<dbReference type="RefSeq" id="WP_000380404.1">
    <property type="nucleotide sequence ID" value="NC_010102.1"/>
</dbReference>
<dbReference type="SMR" id="A9N716"/>
<dbReference type="KEGG" id="spq:SPAB_04082"/>
<dbReference type="PATRIC" id="fig|1016998.12.peg.3845"/>
<dbReference type="HOGENOM" id="CLU_105087_3_0_6"/>
<dbReference type="BioCyc" id="SENT1016998:SPAB_RS16570-MONOMER"/>
<dbReference type="Proteomes" id="UP000008556">
    <property type="component" value="Chromosome"/>
</dbReference>
<dbReference type="Gene3D" id="2.30.110.10">
    <property type="entry name" value="Electron Transport, Fmn-binding Protein, Chain A"/>
    <property type="match status" value="1"/>
</dbReference>
<dbReference type="HAMAP" id="MF_00764">
    <property type="entry name" value="UPF0306"/>
    <property type="match status" value="1"/>
</dbReference>
<dbReference type="InterPro" id="IPR012349">
    <property type="entry name" value="Split_barrel_FMN-bd"/>
</dbReference>
<dbReference type="InterPro" id="IPR011194">
    <property type="entry name" value="UPF0306"/>
</dbReference>
<dbReference type="NCBIfam" id="NF002900">
    <property type="entry name" value="PRK03467.1"/>
    <property type="match status" value="1"/>
</dbReference>
<dbReference type="PIRSF" id="PIRSF009554">
    <property type="entry name" value="UCP009554"/>
    <property type="match status" value="1"/>
</dbReference>
<dbReference type="SUPFAM" id="SSF50475">
    <property type="entry name" value="FMN-binding split barrel"/>
    <property type="match status" value="1"/>
</dbReference>
<protein>
    <recommendedName>
        <fullName evidence="1">UPF0306 protein YhbP</fullName>
    </recommendedName>
</protein>
<sequence>MDTLTAIGRWLAKQHVVTWCVHHEGELWCANAFYLFDAQNVALYLLTDDKTRHAQMSGACAPVAGTVNGQPKTVARIRGVQFKGEIRRLEGQESDAARKAYLRRFPVARVLPAPVWEIRLDEIKFTDNTLGFGKKLHWLRDSRAQQA</sequence>